<gene>
    <name evidence="1" type="primary">secA</name>
    <name type="ordered locus">EcSMS35_0103</name>
</gene>
<accession>B1LG35</accession>
<evidence type="ECO:0000255" key="1">
    <source>
        <dbReference type="HAMAP-Rule" id="MF_01382"/>
    </source>
</evidence>
<evidence type="ECO:0000256" key="2">
    <source>
        <dbReference type="SAM" id="MobiDB-lite"/>
    </source>
</evidence>
<proteinExistence type="inferred from homology"/>
<feature type="chain" id="PRO_1000145012" description="Protein translocase subunit SecA">
    <location>
        <begin position="1"/>
        <end position="901"/>
    </location>
</feature>
<feature type="region of interest" description="Disordered" evidence="2">
    <location>
        <begin position="859"/>
        <end position="901"/>
    </location>
</feature>
<feature type="compositionally biased region" description="Basic residues" evidence="2">
    <location>
        <begin position="891"/>
        <end position="901"/>
    </location>
</feature>
<feature type="binding site" evidence="1">
    <location>
        <position position="87"/>
    </location>
    <ligand>
        <name>ATP</name>
        <dbReference type="ChEBI" id="CHEBI:30616"/>
    </ligand>
</feature>
<feature type="binding site" evidence="1">
    <location>
        <begin position="105"/>
        <end position="109"/>
    </location>
    <ligand>
        <name>ATP</name>
        <dbReference type="ChEBI" id="CHEBI:30616"/>
    </ligand>
</feature>
<feature type="binding site" evidence="1">
    <location>
        <position position="512"/>
    </location>
    <ligand>
        <name>ATP</name>
        <dbReference type="ChEBI" id="CHEBI:30616"/>
    </ligand>
</feature>
<feature type="binding site" evidence="1">
    <location>
        <position position="885"/>
    </location>
    <ligand>
        <name>Zn(2+)</name>
        <dbReference type="ChEBI" id="CHEBI:29105"/>
    </ligand>
</feature>
<feature type="binding site" evidence="1">
    <location>
        <position position="887"/>
    </location>
    <ligand>
        <name>Zn(2+)</name>
        <dbReference type="ChEBI" id="CHEBI:29105"/>
    </ligand>
</feature>
<feature type="binding site" evidence="1">
    <location>
        <position position="896"/>
    </location>
    <ligand>
        <name>Zn(2+)</name>
        <dbReference type="ChEBI" id="CHEBI:29105"/>
    </ligand>
</feature>
<feature type="binding site" evidence="1">
    <location>
        <position position="897"/>
    </location>
    <ligand>
        <name>Zn(2+)</name>
        <dbReference type="ChEBI" id="CHEBI:29105"/>
    </ligand>
</feature>
<reference key="1">
    <citation type="journal article" date="2008" name="J. Bacteriol.">
        <title>Insights into the environmental resistance gene pool from the genome sequence of the multidrug-resistant environmental isolate Escherichia coli SMS-3-5.</title>
        <authorList>
            <person name="Fricke W.F."/>
            <person name="Wright M.S."/>
            <person name="Lindell A.H."/>
            <person name="Harkins D.M."/>
            <person name="Baker-Austin C."/>
            <person name="Ravel J."/>
            <person name="Stepanauskas R."/>
        </authorList>
    </citation>
    <scope>NUCLEOTIDE SEQUENCE [LARGE SCALE GENOMIC DNA]</scope>
    <source>
        <strain>SMS-3-5 / SECEC</strain>
    </source>
</reference>
<comment type="function">
    <text evidence="1">Part of the Sec protein translocase complex. Interacts with the SecYEG preprotein conducting channel. Has a central role in coupling the hydrolysis of ATP to the transfer of proteins into and across the cell membrane, serving both as a receptor for the preprotein-SecB complex and as an ATP-driven molecular motor driving the stepwise translocation of polypeptide chains across the membrane.</text>
</comment>
<comment type="catalytic activity">
    <reaction evidence="1">
        <text>ATP + H2O + cellular proteinSide 1 = ADP + phosphate + cellular proteinSide 2.</text>
        <dbReference type="EC" id="7.4.2.8"/>
    </reaction>
</comment>
<comment type="cofactor">
    <cofactor evidence="1">
        <name>Zn(2+)</name>
        <dbReference type="ChEBI" id="CHEBI:29105"/>
    </cofactor>
    <text evidence="1">May bind 1 zinc ion per subunit.</text>
</comment>
<comment type="subunit">
    <text evidence="1">Monomer and homodimer. Part of the essential Sec protein translocation apparatus which comprises SecA, SecYEG and auxiliary proteins SecDF-YajC and YidC.</text>
</comment>
<comment type="subcellular location">
    <subcellularLocation>
        <location evidence="1">Cell inner membrane</location>
        <topology evidence="1">Peripheral membrane protein</topology>
        <orientation evidence="1">Cytoplasmic side</orientation>
    </subcellularLocation>
    <subcellularLocation>
        <location evidence="1">Cytoplasm</location>
    </subcellularLocation>
    <text evidence="1">Distribution is 50-50.</text>
</comment>
<comment type="induction">
    <text evidence="1">Repressed under conditions of excess protein secretion capacity and derepressed when protein secretion becomes limiting. This is regulated by SecM.</text>
</comment>
<comment type="similarity">
    <text evidence="1">Belongs to the SecA family.</text>
</comment>
<sequence length="901" mass="102023">MLIKLLTKVFGSRNDRTLRRMRKVVNIINAMEPEMEKLSDEELKGKTAEFRARLEKGEVLENLIPEAFAVVREASKRVFGMRHFDVQLLGGMVLNERCIAEMRTGEGKTLTATLPAYLNALTGKGVHVVTVNDYLAQRDAENNRPLFEFLGLTVGINLPGMPAPAKREAYAADITYGTNNEYGFDYLRDNMAFSPEERVQRKLHYALVDEVDSILIDEARTPLIISGPAEDSSEMYKRVNKIIPHLIRQEKEDSETFQGEGHFSVDEKSRQVNLTERGLVLIEELLVKEGIMDEGESLYSPANIMLMHHVTAALRAHALFTRDVDYIVKDGEVIIVDEHTGRTMQGRRWSDGLHQAVEAKEGVQIQNENQTLASITFQNYFRLYEKLAGMTGTADTEAFEFSSIYKLDTVVVPTNRPMIRKDLPDLVYMTEAEKIQAIIEDIKERTAKGQPVLVGTISIEKSELVSNELTKAGIKHNVLNAKFHANEAAIVAQAGYPAAVTIATNMAGRGTDIVLGGSWQAEVAALENPTAEQIEKIKADWQVRHDAVLEAGGLHIIGTERHESRRIDNQLRGRSGRQGDAGSSRFYLSMEDALMRIFASDRVSGMMRKLGMKPGEAIEHPWVTKAIANAQRKVESRNFDIRKQLLEYDDVANDQRRAIYSQRNELLDVSDVSETINSIREDVFKATIDAYIPPQSLEEMWDIPGLQERLKNDFDLDLPIAEWLDKEPELHEETLRERILAQSIEVYQRKEEVVGAEMMRHFEKGVMLQTLDSLWKEHLAAMDYLRQGIHLRGYAQKDPKQEYKRESFSMFAAMLESLKYEVISTLSKVQVRMPEEVEELEQQRRMEAERLAQMQQLSHQDDDSAAAAALAAQTGERKVGRNDPCPCGSGKKYKQCHGRLQ</sequence>
<name>SECA_ECOSM</name>
<protein>
    <recommendedName>
        <fullName evidence="1">Protein translocase subunit SecA</fullName>
        <ecNumber evidence="1">7.4.2.8</ecNumber>
    </recommendedName>
</protein>
<keyword id="KW-0067">ATP-binding</keyword>
<keyword id="KW-0997">Cell inner membrane</keyword>
<keyword id="KW-1003">Cell membrane</keyword>
<keyword id="KW-0963">Cytoplasm</keyword>
<keyword id="KW-0472">Membrane</keyword>
<keyword id="KW-0479">Metal-binding</keyword>
<keyword id="KW-0547">Nucleotide-binding</keyword>
<keyword id="KW-0653">Protein transport</keyword>
<keyword id="KW-1278">Translocase</keyword>
<keyword id="KW-0811">Translocation</keyword>
<keyword id="KW-0813">Transport</keyword>
<keyword id="KW-0862">Zinc</keyword>
<dbReference type="EC" id="7.4.2.8" evidence="1"/>
<dbReference type="EMBL" id="CP000970">
    <property type="protein sequence ID" value="ACB16688.1"/>
    <property type="molecule type" value="Genomic_DNA"/>
</dbReference>
<dbReference type="RefSeq" id="WP_000905789.1">
    <property type="nucleotide sequence ID" value="NC_010498.1"/>
</dbReference>
<dbReference type="SMR" id="B1LG35"/>
<dbReference type="GeneID" id="93777336"/>
<dbReference type="KEGG" id="ecm:EcSMS35_0103"/>
<dbReference type="HOGENOM" id="CLU_005314_3_0_6"/>
<dbReference type="Proteomes" id="UP000007011">
    <property type="component" value="Chromosome"/>
</dbReference>
<dbReference type="GO" id="GO:0031522">
    <property type="term" value="C:cell envelope Sec protein transport complex"/>
    <property type="evidence" value="ECO:0007669"/>
    <property type="project" value="TreeGrafter"/>
</dbReference>
<dbReference type="GO" id="GO:0005829">
    <property type="term" value="C:cytosol"/>
    <property type="evidence" value="ECO:0007669"/>
    <property type="project" value="TreeGrafter"/>
</dbReference>
<dbReference type="GO" id="GO:0005886">
    <property type="term" value="C:plasma membrane"/>
    <property type="evidence" value="ECO:0007669"/>
    <property type="project" value="UniProtKB-SubCell"/>
</dbReference>
<dbReference type="GO" id="GO:0005524">
    <property type="term" value="F:ATP binding"/>
    <property type="evidence" value="ECO:0007669"/>
    <property type="project" value="UniProtKB-UniRule"/>
</dbReference>
<dbReference type="GO" id="GO:0046872">
    <property type="term" value="F:metal ion binding"/>
    <property type="evidence" value="ECO:0007669"/>
    <property type="project" value="UniProtKB-KW"/>
</dbReference>
<dbReference type="GO" id="GO:0008564">
    <property type="term" value="F:protein-exporting ATPase activity"/>
    <property type="evidence" value="ECO:0007669"/>
    <property type="project" value="UniProtKB-EC"/>
</dbReference>
<dbReference type="GO" id="GO:0065002">
    <property type="term" value="P:intracellular protein transmembrane transport"/>
    <property type="evidence" value="ECO:0007669"/>
    <property type="project" value="UniProtKB-UniRule"/>
</dbReference>
<dbReference type="GO" id="GO:0017038">
    <property type="term" value="P:protein import"/>
    <property type="evidence" value="ECO:0007669"/>
    <property type="project" value="InterPro"/>
</dbReference>
<dbReference type="GO" id="GO:0006605">
    <property type="term" value="P:protein targeting"/>
    <property type="evidence" value="ECO:0007669"/>
    <property type="project" value="UniProtKB-UniRule"/>
</dbReference>
<dbReference type="GO" id="GO:0043952">
    <property type="term" value="P:protein transport by the Sec complex"/>
    <property type="evidence" value="ECO:0007669"/>
    <property type="project" value="TreeGrafter"/>
</dbReference>
<dbReference type="CDD" id="cd17928">
    <property type="entry name" value="DEXDc_SecA"/>
    <property type="match status" value="1"/>
</dbReference>
<dbReference type="CDD" id="cd18803">
    <property type="entry name" value="SF2_C_secA"/>
    <property type="match status" value="1"/>
</dbReference>
<dbReference type="FunFam" id="1.10.3060.10:FF:000001">
    <property type="entry name" value="Preprotein translocase subunit SecA"/>
    <property type="match status" value="1"/>
</dbReference>
<dbReference type="FunFam" id="3.40.50.300:FF:000081">
    <property type="entry name" value="Preprotein translocase subunit SecA"/>
    <property type="match status" value="1"/>
</dbReference>
<dbReference type="FunFam" id="3.40.50.300:FF:000113">
    <property type="entry name" value="Preprotein translocase subunit SecA"/>
    <property type="match status" value="1"/>
</dbReference>
<dbReference type="FunFam" id="3.90.1440.10:FF:000001">
    <property type="entry name" value="Preprotein translocase subunit SecA"/>
    <property type="match status" value="1"/>
</dbReference>
<dbReference type="Gene3D" id="1.10.3060.10">
    <property type="entry name" value="Helical scaffold and wing domains of SecA"/>
    <property type="match status" value="1"/>
</dbReference>
<dbReference type="Gene3D" id="3.40.50.300">
    <property type="entry name" value="P-loop containing nucleotide triphosphate hydrolases"/>
    <property type="match status" value="2"/>
</dbReference>
<dbReference type="Gene3D" id="3.90.1440.10">
    <property type="entry name" value="SecA, preprotein cross-linking domain"/>
    <property type="match status" value="1"/>
</dbReference>
<dbReference type="HAMAP" id="MF_01382">
    <property type="entry name" value="SecA"/>
    <property type="match status" value="1"/>
</dbReference>
<dbReference type="InterPro" id="IPR014001">
    <property type="entry name" value="Helicase_ATP-bd"/>
</dbReference>
<dbReference type="InterPro" id="IPR001650">
    <property type="entry name" value="Helicase_C-like"/>
</dbReference>
<dbReference type="InterPro" id="IPR027417">
    <property type="entry name" value="P-loop_NTPase"/>
</dbReference>
<dbReference type="InterPro" id="IPR004027">
    <property type="entry name" value="SEC_C_motif"/>
</dbReference>
<dbReference type="InterPro" id="IPR000185">
    <property type="entry name" value="SecA"/>
</dbReference>
<dbReference type="InterPro" id="IPR020937">
    <property type="entry name" value="SecA_CS"/>
</dbReference>
<dbReference type="InterPro" id="IPR011115">
    <property type="entry name" value="SecA_DEAD"/>
</dbReference>
<dbReference type="InterPro" id="IPR014018">
    <property type="entry name" value="SecA_motor_DEAD"/>
</dbReference>
<dbReference type="InterPro" id="IPR011130">
    <property type="entry name" value="SecA_preprotein_X-link_dom"/>
</dbReference>
<dbReference type="InterPro" id="IPR044722">
    <property type="entry name" value="SecA_SF2_C"/>
</dbReference>
<dbReference type="InterPro" id="IPR011116">
    <property type="entry name" value="SecA_Wing/Scaffold"/>
</dbReference>
<dbReference type="InterPro" id="IPR036266">
    <property type="entry name" value="SecA_Wing/Scaffold_sf"/>
</dbReference>
<dbReference type="InterPro" id="IPR036670">
    <property type="entry name" value="SecA_X-link_sf"/>
</dbReference>
<dbReference type="NCBIfam" id="NF009538">
    <property type="entry name" value="PRK12904.1"/>
    <property type="match status" value="1"/>
</dbReference>
<dbReference type="NCBIfam" id="TIGR00963">
    <property type="entry name" value="secA"/>
    <property type="match status" value="1"/>
</dbReference>
<dbReference type="PANTHER" id="PTHR30612:SF0">
    <property type="entry name" value="CHLOROPLAST PROTEIN-TRANSPORTING ATPASE"/>
    <property type="match status" value="1"/>
</dbReference>
<dbReference type="PANTHER" id="PTHR30612">
    <property type="entry name" value="SECA INNER MEMBRANE COMPONENT OF SEC PROTEIN SECRETION SYSTEM"/>
    <property type="match status" value="1"/>
</dbReference>
<dbReference type="Pfam" id="PF21090">
    <property type="entry name" value="P-loop_SecA"/>
    <property type="match status" value="1"/>
</dbReference>
<dbReference type="Pfam" id="PF02810">
    <property type="entry name" value="SEC-C"/>
    <property type="match status" value="1"/>
</dbReference>
<dbReference type="Pfam" id="PF07517">
    <property type="entry name" value="SecA_DEAD"/>
    <property type="match status" value="1"/>
</dbReference>
<dbReference type="Pfam" id="PF01043">
    <property type="entry name" value="SecA_PP_bind"/>
    <property type="match status" value="1"/>
</dbReference>
<dbReference type="Pfam" id="PF07516">
    <property type="entry name" value="SecA_SW"/>
    <property type="match status" value="1"/>
</dbReference>
<dbReference type="PRINTS" id="PR00906">
    <property type="entry name" value="SECA"/>
</dbReference>
<dbReference type="SMART" id="SM00957">
    <property type="entry name" value="SecA_DEAD"/>
    <property type="match status" value="1"/>
</dbReference>
<dbReference type="SMART" id="SM00958">
    <property type="entry name" value="SecA_PP_bind"/>
    <property type="match status" value="1"/>
</dbReference>
<dbReference type="SUPFAM" id="SSF81886">
    <property type="entry name" value="Helical scaffold and wing domains of SecA"/>
    <property type="match status" value="1"/>
</dbReference>
<dbReference type="SUPFAM" id="SSF52540">
    <property type="entry name" value="P-loop containing nucleoside triphosphate hydrolases"/>
    <property type="match status" value="2"/>
</dbReference>
<dbReference type="SUPFAM" id="SSF81767">
    <property type="entry name" value="Pre-protein crosslinking domain of SecA"/>
    <property type="match status" value="1"/>
</dbReference>
<dbReference type="PROSITE" id="PS01312">
    <property type="entry name" value="SECA"/>
    <property type="match status" value="1"/>
</dbReference>
<dbReference type="PROSITE" id="PS51196">
    <property type="entry name" value="SECA_MOTOR_DEAD"/>
    <property type="match status" value="1"/>
</dbReference>
<organism>
    <name type="scientific">Escherichia coli (strain SMS-3-5 / SECEC)</name>
    <dbReference type="NCBI Taxonomy" id="439855"/>
    <lineage>
        <taxon>Bacteria</taxon>
        <taxon>Pseudomonadati</taxon>
        <taxon>Pseudomonadota</taxon>
        <taxon>Gammaproteobacteria</taxon>
        <taxon>Enterobacterales</taxon>
        <taxon>Enterobacteriaceae</taxon>
        <taxon>Escherichia</taxon>
    </lineage>
</organism>